<proteinExistence type="inferred from homology"/>
<protein>
    <recommendedName>
        <fullName evidence="1">NADPH-dependent 7-cyano-7-deazaguanine reductase</fullName>
        <ecNumber evidence="1">1.7.1.13</ecNumber>
    </recommendedName>
    <alternativeName>
        <fullName evidence="1">7-cyano-7-carbaguanine reductase</fullName>
    </alternativeName>
    <alternativeName>
        <fullName evidence="1">NADPH-dependent nitrile oxidoreductase</fullName>
    </alternativeName>
    <alternativeName>
        <fullName evidence="1">PreQ(0) reductase</fullName>
    </alternativeName>
</protein>
<sequence>MTGRLDEDLKDVTLLGNQNTKYLFEYSPEILEVFDNNHPNRDYFVKFNCPEFTSLCPKTGQPDFATIYISYIPEQKMVESKSLKLYLFSFRNHGDFHEDCMNVIMNDLIKLMDPRYIEVWGKFTPRGGISIDPYCNYGRPGTKYEQMADYRMMNHDLYPETIDNR</sequence>
<keyword id="KW-0963">Cytoplasm</keyword>
<keyword id="KW-0521">NADP</keyword>
<keyword id="KW-0560">Oxidoreductase</keyword>
<keyword id="KW-0671">Queuosine biosynthesis</keyword>
<keyword id="KW-1185">Reference proteome</keyword>
<dbReference type="EC" id="1.7.1.13" evidence="1"/>
<dbReference type="EMBL" id="AE016877">
    <property type="protein sequence ID" value="AAP08326.1"/>
    <property type="molecule type" value="Genomic_DNA"/>
</dbReference>
<dbReference type="RefSeq" id="NP_831125.1">
    <property type="nucleotide sequence ID" value="NC_004722.1"/>
</dbReference>
<dbReference type="RefSeq" id="WP_001986050.1">
    <property type="nucleotide sequence ID" value="NZ_CP138336.1"/>
</dbReference>
<dbReference type="SMR" id="Q81G66"/>
<dbReference type="STRING" id="226900.BC_1344"/>
<dbReference type="MetOSite" id="Q81G66"/>
<dbReference type="GeneID" id="72448115"/>
<dbReference type="KEGG" id="bce:BC1344"/>
<dbReference type="PATRIC" id="fig|226900.8.peg.1320"/>
<dbReference type="HOGENOM" id="CLU_102489_0_1_9"/>
<dbReference type="OrthoDB" id="9795077at2"/>
<dbReference type="UniPathway" id="UPA00392"/>
<dbReference type="Proteomes" id="UP000001417">
    <property type="component" value="Chromosome"/>
</dbReference>
<dbReference type="GO" id="GO:0005829">
    <property type="term" value="C:cytosol"/>
    <property type="evidence" value="ECO:0000318"/>
    <property type="project" value="GO_Central"/>
</dbReference>
<dbReference type="GO" id="GO:0033739">
    <property type="term" value="F:preQ1 synthase activity"/>
    <property type="evidence" value="ECO:0000318"/>
    <property type="project" value="GO_Central"/>
</dbReference>
<dbReference type="GO" id="GO:0008616">
    <property type="term" value="P:queuosine biosynthetic process"/>
    <property type="evidence" value="ECO:0000318"/>
    <property type="project" value="GO_Central"/>
</dbReference>
<dbReference type="GO" id="GO:0006400">
    <property type="term" value="P:tRNA modification"/>
    <property type="evidence" value="ECO:0007669"/>
    <property type="project" value="UniProtKB-UniRule"/>
</dbReference>
<dbReference type="Gene3D" id="3.30.1130.10">
    <property type="match status" value="1"/>
</dbReference>
<dbReference type="HAMAP" id="MF_00818">
    <property type="entry name" value="QueF_type1"/>
    <property type="match status" value="1"/>
</dbReference>
<dbReference type="InterPro" id="IPR043133">
    <property type="entry name" value="GTP-CH-I_C/QueF"/>
</dbReference>
<dbReference type="InterPro" id="IPR050084">
    <property type="entry name" value="NADPH_dep_7-cyano-7-deazaG_red"/>
</dbReference>
<dbReference type="InterPro" id="IPR029500">
    <property type="entry name" value="QueF"/>
</dbReference>
<dbReference type="InterPro" id="IPR016856">
    <property type="entry name" value="QueF_type1"/>
</dbReference>
<dbReference type="NCBIfam" id="TIGR03139">
    <property type="entry name" value="QueF-II"/>
    <property type="match status" value="1"/>
</dbReference>
<dbReference type="PANTHER" id="PTHR34354">
    <property type="entry name" value="NADPH-DEPENDENT 7-CYANO-7-DEAZAGUANINE REDUCTASE"/>
    <property type="match status" value="1"/>
</dbReference>
<dbReference type="PANTHER" id="PTHR34354:SF1">
    <property type="entry name" value="NADPH-DEPENDENT 7-CYANO-7-DEAZAGUANINE REDUCTASE"/>
    <property type="match status" value="1"/>
</dbReference>
<dbReference type="Pfam" id="PF14489">
    <property type="entry name" value="QueF"/>
    <property type="match status" value="1"/>
</dbReference>
<dbReference type="PIRSF" id="PIRSF027377">
    <property type="entry name" value="Nitrile_oxidored_QueF"/>
    <property type="match status" value="1"/>
</dbReference>
<dbReference type="SUPFAM" id="SSF55620">
    <property type="entry name" value="Tetrahydrobiopterin biosynthesis enzymes-like"/>
    <property type="match status" value="1"/>
</dbReference>
<comment type="function">
    <text evidence="1">Catalyzes the NADPH-dependent reduction of 7-cyano-7-deazaguanine (preQ0) to 7-aminomethyl-7-deazaguanine (preQ1).</text>
</comment>
<comment type="catalytic activity">
    <reaction evidence="1">
        <text>7-aminomethyl-7-carbaguanine + 2 NADP(+) = 7-cyano-7-deazaguanine + 2 NADPH + 3 H(+)</text>
        <dbReference type="Rhea" id="RHEA:13409"/>
        <dbReference type="ChEBI" id="CHEBI:15378"/>
        <dbReference type="ChEBI" id="CHEBI:45075"/>
        <dbReference type="ChEBI" id="CHEBI:57783"/>
        <dbReference type="ChEBI" id="CHEBI:58349"/>
        <dbReference type="ChEBI" id="CHEBI:58703"/>
        <dbReference type="EC" id="1.7.1.13"/>
    </reaction>
</comment>
<comment type="pathway">
    <text evidence="1">tRNA modification; tRNA-queuosine biosynthesis.</text>
</comment>
<comment type="subcellular location">
    <subcellularLocation>
        <location evidence="1">Cytoplasm</location>
    </subcellularLocation>
</comment>
<comment type="similarity">
    <text evidence="1">Belongs to the GTP cyclohydrolase I family. QueF type 1 subfamily.</text>
</comment>
<organism>
    <name type="scientific">Bacillus cereus (strain ATCC 14579 / DSM 31 / CCUG 7414 / JCM 2152 / NBRC 15305 / NCIMB 9373 / NCTC 2599 / NRRL B-3711)</name>
    <dbReference type="NCBI Taxonomy" id="226900"/>
    <lineage>
        <taxon>Bacteria</taxon>
        <taxon>Bacillati</taxon>
        <taxon>Bacillota</taxon>
        <taxon>Bacilli</taxon>
        <taxon>Bacillales</taxon>
        <taxon>Bacillaceae</taxon>
        <taxon>Bacillus</taxon>
        <taxon>Bacillus cereus group</taxon>
    </lineage>
</organism>
<reference key="1">
    <citation type="journal article" date="2003" name="Nature">
        <title>Genome sequence of Bacillus cereus and comparative analysis with Bacillus anthracis.</title>
        <authorList>
            <person name="Ivanova N."/>
            <person name="Sorokin A."/>
            <person name="Anderson I."/>
            <person name="Galleron N."/>
            <person name="Candelon B."/>
            <person name="Kapatral V."/>
            <person name="Bhattacharyya A."/>
            <person name="Reznik G."/>
            <person name="Mikhailova N."/>
            <person name="Lapidus A."/>
            <person name="Chu L."/>
            <person name="Mazur M."/>
            <person name="Goltsman E."/>
            <person name="Larsen N."/>
            <person name="D'Souza M."/>
            <person name="Walunas T."/>
            <person name="Grechkin Y."/>
            <person name="Pusch G."/>
            <person name="Haselkorn R."/>
            <person name="Fonstein M."/>
            <person name="Ehrlich S.D."/>
            <person name="Overbeek R."/>
            <person name="Kyrpides N.C."/>
        </authorList>
    </citation>
    <scope>NUCLEOTIDE SEQUENCE [LARGE SCALE GENOMIC DNA]</scope>
    <source>
        <strain>ATCC 14579 / DSM 31 / CCUG 7414 / JCM 2152 / NBRC 15305 / NCIMB 9373 / NCTC 2599 / NRRL B-3711</strain>
    </source>
</reference>
<name>QUEF_BACCR</name>
<evidence type="ECO:0000255" key="1">
    <source>
        <dbReference type="HAMAP-Rule" id="MF_00818"/>
    </source>
</evidence>
<feature type="chain" id="PRO_0000162952" description="NADPH-dependent 7-cyano-7-deazaguanine reductase">
    <location>
        <begin position="1"/>
        <end position="165"/>
    </location>
</feature>
<feature type="active site" description="Thioimide intermediate" evidence="1">
    <location>
        <position position="56"/>
    </location>
</feature>
<feature type="active site" description="Proton donor" evidence="1">
    <location>
        <position position="63"/>
    </location>
</feature>
<feature type="binding site" evidence="1">
    <location>
        <begin position="78"/>
        <end position="80"/>
    </location>
    <ligand>
        <name>substrate</name>
    </ligand>
</feature>
<feature type="binding site" evidence="1">
    <location>
        <begin position="97"/>
        <end position="98"/>
    </location>
    <ligand>
        <name>substrate</name>
    </ligand>
</feature>
<gene>
    <name evidence="1" type="primary">queF</name>
    <name type="ordered locus">BC_1344</name>
</gene>
<accession>Q81G66</accession>